<proteinExistence type="evidence at transcript level"/>
<protein>
    <recommendedName>
        <fullName>Hemoglobin subunit alpha-D</fullName>
    </recommendedName>
    <alternativeName>
        <fullName>Alpha-D-globin</fullName>
    </alternativeName>
    <alternativeName>
        <fullName>Hemoglobin alpha-D chain</fullName>
    </alternativeName>
</protein>
<evidence type="ECO:0000255" key="1">
    <source>
        <dbReference type="PROSITE-ProRule" id="PRU00238"/>
    </source>
</evidence>
<accession>O12985</accession>
<feature type="chain" id="PRO_0000052825" description="Hemoglobin subunit alpha-D">
    <location>
        <begin position="1"/>
        <end position="140"/>
    </location>
</feature>
<feature type="domain" description="Globin" evidence="1">
    <location>
        <begin position="1"/>
        <end position="140"/>
    </location>
</feature>
<feature type="binding site" description="distal binding residue">
    <location>
        <position position="57"/>
    </location>
    <ligand>
        <name>heme b</name>
        <dbReference type="ChEBI" id="CHEBI:60344"/>
    </ligand>
    <ligandPart>
        <name>Fe</name>
        <dbReference type="ChEBI" id="CHEBI:18248"/>
    </ligandPart>
</feature>
<feature type="binding site" description="proximal binding residue">
    <location>
        <position position="86"/>
    </location>
    <ligand>
        <name>heme b</name>
        <dbReference type="ChEBI" id="CHEBI:60344"/>
    </ligand>
    <ligandPart>
        <name>Fe</name>
        <dbReference type="ChEBI" id="CHEBI:18248"/>
    </ligandPart>
</feature>
<gene>
    <name type="primary">HBAD</name>
</gene>
<reference key="1">
    <citation type="journal article" date="1997" name="Biochem. Biophys. Res. Commun.">
        <title>Isolation and sequencing of two alpha-globin genes alpha(A) and alpha(D) in pigeon and evidence for embryo-specific expression of the alpha(D)-globin gene.</title>
        <authorList>
            <person name="Ikehara T."/>
            <person name="Eguchi Y."/>
            <person name="Kayo S."/>
            <person name="Takei H."/>
        </authorList>
    </citation>
    <scope>NUCLEOTIDE SEQUENCE [GENOMIC DNA]</scope>
</reference>
<dbReference type="EMBL" id="AB001981">
    <property type="protein sequence ID" value="BAA19668.1"/>
    <property type="molecule type" value="Genomic_DNA"/>
</dbReference>
<dbReference type="PIR" id="JC5515">
    <property type="entry name" value="JC5515"/>
</dbReference>
<dbReference type="RefSeq" id="XP_005508517.1">
    <property type="nucleotide sequence ID" value="XM_005508460.3"/>
</dbReference>
<dbReference type="SMR" id="O12985"/>
<dbReference type="GeneID" id="102090670"/>
<dbReference type="KEGG" id="clv:102090670"/>
<dbReference type="CTD" id="416651"/>
<dbReference type="eggNOG" id="KOG3378">
    <property type="taxonomic scope" value="Eukaryota"/>
</dbReference>
<dbReference type="OrthoDB" id="296417at8782"/>
<dbReference type="GO" id="GO:0072562">
    <property type="term" value="C:blood microparticle"/>
    <property type="evidence" value="ECO:0007669"/>
    <property type="project" value="TreeGrafter"/>
</dbReference>
<dbReference type="GO" id="GO:0031838">
    <property type="term" value="C:haptoglobin-hemoglobin complex"/>
    <property type="evidence" value="ECO:0007669"/>
    <property type="project" value="TreeGrafter"/>
</dbReference>
<dbReference type="GO" id="GO:0005833">
    <property type="term" value="C:hemoglobin complex"/>
    <property type="evidence" value="ECO:0007669"/>
    <property type="project" value="InterPro"/>
</dbReference>
<dbReference type="GO" id="GO:0031720">
    <property type="term" value="F:haptoglobin binding"/>
    <property type="evidence" value="ECO:0007669"/>
    <property type="project" value="TreeGrafter"/>
</dbReference>
<dbReference type="GO" id="GO:0020037">
    <property type="term" value="F:heme binding"/>
    <property type="evidence" value="ECO:0007669"/>
    <property type="project" value="InterPro"/>
</dbReference>
<dbReference type="GO" id="GO:0046872">
    <property type="term" value="F:metal ion binding"/>
    <property type="evidence" value="ECO:0007669"/>
    <property type="project" value="UniProtKB-KW"/>
</dbReference>
<dbReference type="GO" id="GO:0043177">
    <property type="term" value="F:organic acid binding"/>
    <property type="evidence" value="ECO:0007669"/>
    <property type="project" value="TreeGrafter"/>
</dbReference>
<dbReference type="GO" id="GO:0019825">
    <property type="term" value="F:oxygen binding"/>
    <property type="evidence" value="ECO:0007669"/>
    <property type="project" value="InterPro"/>
</dbReference>
<dbReference type="GO" id="GO:0005344">
    <property type="term" value="F:oxygen carrier activity"/>
    <property type="evidence" value="ECO:0007669"/>
    <property type="project" value="UniProtKB-KW"/>
</dbReference>
<dbReference type="GO" id="GO:0004601">
    <property type="term" value="F:peroxidase activity"/>
    <property type="evidence" value="ECO:0007669"/>
    <property type="project" value="TreeGrafter"/>
</dbReference>
<dbReference type="GO" id="GO:0042744">
    <property type="term" value="P:hydrogen peroxide catabolic process"/>
    <property type="evidence" value="ECO:0007669"/>
    <property type="project" value="TreeGrafter"/>
</dbReference>
<dbReference type="CDD" id="cd08927">
    <property type="entry name" value="Hb-alpha-like"/>
    <property type="match status" value="1"/>
</dbReference>
<dbReference type="FunFam" id="1.10.490.10:FF:000002">
    <property type="entry name" value="Hemoglobin subunit alpha"/>
    <property type="match status" value="1"/>
</dbReference>
<dbReference type="Gene3D" id="1.10.490.10">
    <property type="entry name" value="Globins"/>
    <property type="match status" value="1"/>
</dbReference>
<dbReference type="InterPro" id="IPR000971">
    <property type="entry name" value="Globin"/>
</dbReference>
<dbReference type="InterPro" id="IPR009050">
    <property type="entry name" value="Globin-like_sf"/>
</dbReference>
<dbReference type="InterPro" id="IPR012292">
    <property type="entry name" value="Globin/Proto"/>
</dbReference>
<dbReference type="InterPro" id="IPR002338">
    <property type="entry name" value="Hemoglobin_a-typ"/>
</dbReference>
<dbReference type="InterPro" id="IPR050056">
    <property type="entry name" value="Hemoglobin_oxygen_transport"/>
</dbReference>
<dbReference type="PANTHER" id="PTHR11442">
    <property type="entry name" value="HEMOGLOBIN FAMILY MEMBER"/>
    <property type="match status" value="1"/>
</dbReference>
<dbReference type="PANTHER" id="PTHR11442:SF41">
    <property type="entry name" value="HEMOGLOBIN SUBUNIT ZETA"/>
    <property type="match status" value="1"/>
</dbReference>
<dbReference type="Pfam" id="PF00042">
    <property type="entry name" value="Globin"/>
    <property type="match status" value="1"/>
</dbReference>
<dbReference type="PRINTS" id="PR00612">
    <property type="entry name" value="ALPHAHAEM"/>
</dbReference>
<dbReference type="SUPFAM" id="SSF46458">
    <property type="entry name" value="Globin-like"/>
    <property type="match status" value="1"/>
</dbReference>
<dbReference type="PROSITE" id="PS01033">
    <property type="entry name" value="GLOBIN"/>
    <property type="match status" value="1"/>
</dbReference>
<keyword id="KW-0349">Heme</keyword>
<keyword id="KW-0408">Iron</keyword>
<keyword id="KW-0479">Metal-binding</keyword>
<keyword id="KW-0561">Oxygen transport</keyword>
<keyword id="KW-0813">Transport</keyword>
<comment type="function">
    <text>Involved in oxygen transport from the lung to the various peripheral tissues.</text>
</comment>
<comment type="subunit">
    <text>Heterotetramer of two alpha-D chains and two beta chains.</text>
</comment>
<comment type="tissue specificity">
    <text>Red blood cells.</text>
</comment>
<comment type="developmental stage">
    <text>In birds, the alpha-D chain occurs in a minor hemoglobin component, called hemoglobin d, which is expressed in late embryonic and adult life.</text>
</comment>
<comment type="similarity">
    <text evidence="1">Belongs to the globin family.</text>
</comment>
<organism>
    <name type="scientific">Columba livia</name>
    <name type="common">Rock dove</name>
    <dbReference type="NCBI Taxonomy" id="8932"/>
    <lineage>
        <taxon>Eukaryota</taxon>
        <taxon>Metazoa</taxon>
        <taxon>Chordata</taxon>
        <taxon>Craniata</taxon>
        <taxon>Vertebrata</taxon>
        <taxon>Euteleostomi</taxon>
        <taxon>Archelosauria</taxon>
        <taxon>Archosauria</taxon>
        <taxon>Dinosauria</taxon>
        <taxon>Saurischia</taxon>
        <taxon>Theropoda</taxon>
        <taxon>Coelurosauria</taxon>
        <taxon>Aves</taxon>
        <taxon>Neognathae</taxon>
        <taxon>Neoaves</taxon>
        <taxon>Columbimorphae</taxon>
        <taxon>Columbiformes</taxon>
        <taxon>Columbidae</taxon>
        <taxon>Columba</taxon>
    </lineage>
</organism>
<name>HBAD_COLLI</name>
<sequence>MLTDSDKKLVLQVWEKVIRHPDCGAEALERLFTTYPQTKTYFPHFDLHHGSDQVRNHGKKVLAALGNAVKSLGNLSQALSDLSDLHAYNLRVDPVNFKLLAQCFHVVLATHLGNDYTPEAHAAFDKFLSAVCTVLAEKYR</sequence>